<accession>Q31Z86</accession>
<gene>
    <name type="primary">efeB</name>
    <name type="ordered locus">SBO_2039</name>
</gene>
<protein>
    <recommendedName>
        <fullName>Deferrochelatase</fullName>
        <ecNumber evidence="2">4.98.1.1</ecNumber>
    </recommendedName>
    <alternativeName>
        <fullName>Peroxidase EfeB</fullName>
        <ecNumber evidence="2">1.11.1.-</ecNumber>
    </alternativeName>
</protein>
<feature type="signal peptide" description="Tat-type signal" evidence="3">
    <location>
        <begin position="1"/>
        <end position="35"/>
    </location>
</feature>
<feature type="chain" id="PRO_0000278547" description="Deferrochelatase">
    <location>
        <begin position="36"/>
        <end position="423"/>
    </location>
</feature>
<feature type="binding site" evidence="2">
    <location>
        <begin position="236"/>
        <end position="238"/>
    </location>
    <ligand>
        <name>heme b</name>
        <dbReference type="ChEBI" id="CHEBI:60344"/>
    </ligand>
</feature>
<feature type="binding site" description="proximal binding residue" evidence="2">
    <location>
        <position position="329"/>
    </location>
    <ligand>
        <name>heme b</name>
        <dbReference type="ChEBI" id="CHEBI:60344"/>
    </ligand>
    <ligandPart>
        <name>Fe</name>
        <dbReference type="ChEBI" id="CHEBI:18248"/>
    </ligandPart>
</feature>
<feature type="binding site" evidence="2">
    <location>
        <begin position="334"/>
        <end position="336"/>
    </location>
    <ligand>
        <name>heme b</name>
        <dbReference type="ChEBI" id="CHEBI:60344"/>
    </ligand>
</feature>
<feature type="binding site" evidence="2">
    <location>
        <position position="347"/>
    </location>
    <ligand>
        <name>heme b</name>
        <dbReference type="ChEBI" id="CHEBI:60344"/>
    </ligand>
</feature>
<proteinExistence type="inferred from homology"/>
<name>EFEB_SHIBS</name>
<comment type="function">
    <text evidence="2">Involved in the recovery of exogenous heme iron. Extracts iron from heme while preserving the protoporphyrin ring intact.</text>
</comment>
<comment type="catalytic activity">
    <reaction evidence="2">
        <text>heme b + 2 H(+) = protoporphyrin IX + Fe(2+)</text>
        <dbReference type="Rhea" id="RHEA:22584"/>
        <dbReference type="ChEBI" id="CHEBI:15378"/>
        <dbReference type="ChEBI" id="CHEBI:29033"/>
        <dbReference type="ChEBI" id="CHEBI:57306"/>
        <dbReference type="ChEBI" id="CHEBI:60344"/>
        <dbReference type="EC" id="4.98.1.1"/>
    </reaction>
    <physiologicalReaction direction="left-to-right" evidence="2">
        <dbReference type="Rhea" id="RHEA:22585"/>
    </physiologicalReaction>
</comment>
<comment type="cofactor">
    <cofactor evidence="1">
        <name>heme b</name>
        <dbReference type="ChEBI" id="CHEBI:60344"/>
    </cofactor>
    <text evidence="1">Binds 1 heme b (iron(II)-protoporphyrin IX) group non-covalently per subunit.</text>
</comment>
<comment type="subunit">
    <text evidence="1">Homodimer. Part of a ferrous iron transporter composed of EfeU, EfeO and EfeB (By similarity).</text>
</comment>
<comment type="subcellular location">
    <subcellularLocation>
        <location evidence="1">Periplasm</location>
    </subcellularLocation>
</comment>
<comment type="PTM">
    <text>Predicted to be exported by the Tat system. The position of the signal peptide cleavage has not been experimentally proven.</text>
</comment>
<comment type="similarity">
    <text evidence="4">Belongs to the DyP-type peroxidase family. EfeB subfamily.</text>
</comment>
<evidence type="ECO:0000250" key="1"/>
<evidence type="ECO:0000250" key="2">
    <source>
        <dbReference type="UniProtKB" id="P31545"/>
    </source>
</evidence>
<evidence type="ECO:0000255" key="3">
    <source>
        <dbReference type="PROSITE-ProRule" id="PRU00648"/>
    </source>
</evidence>
<evidence type="ECO:0000305" key="4"/>
<reference key="1">
    <citation type="journal article" date="2005" name="Nucleic Acids Res.">
        <title>Genome dynamics and diversity of Shigella species, the etiologic agents of bacillary dysentery.</title>
        <authorList>
            <person name="Yang F."/>
            <person name="Yang J."/>
            <person name="Zhang X."/>
            <person name="Chen L."/>
            <person name="Jiang Y."/>
            <person name="Yan Y."/>
            <person name="Tang X."/>
            <person name="Wang J."/>
            <person name="Xiong Z."/>
            <person name="Dong J."/>
            <person name="Xue Y."/>
            <person name="Zhu Y."/>
            <person name="Xu X."/>
            <person name="Sun L."/>
            <person name="Chen S."/>
            <person name="Nie H."/>
            <person name="Peng J."/>
            <person name="Xu J."/>
            <person name="Wang Y."/>
            <person name="Yuan Z."/>
            <person name="Wen Y."/>
            <person name="Yao Z."/>
            <person name="Shen Y."/>
            <person name="Qiang B."/>
            <person name="Hou Y."/>
            <person name="Yu J."/>
            <person name="Jin Q."/>
        </authorList>
    </citation>
    <scope>NUCLEOTIDE SEQUENCE [LARGE SCALE GENOMIC DNA]</scope>
    <source>
        <strain>Sb227</strain>
    </source>
</reference>
<sequence length="423" mass="46736">MQYKDENGVNEPSRRRLLKVIGALALAGSCPVAHAQKTQSAPGTLSPDARNEKQPFYGEHQAGILTPQQAAMMLVAFDVLASDKADLERLFRLLTQRFAFLTQGGAAPETPNPRLPPLDSGILGGYIAPDNLTITLSVGHSLFDERFGLAPQMPKKLQKMTRFPNDSLDAALCHGDVLLQICANTQDTVIHALRDIIKHTPDLLSVRWKREGFISDHAARSKGKETPINLLGFKDGTANPDSQNDKLMQKVVWVTADQQEPAWTIGGSYQAVRLIQFRVEFWDRTPLKEQQTIFGRDKQTGAPLGMQHEHDVPDYASDPEGKVIALDSHIRLANPRTAESESSLMLRRGYSYSLGVTNSGQLDMGLLFVCYQHDLEKGFLTVQKRLNGEALEEYVKPIGGGYFFSLPGVKDANDYLGSALLRV</sequence>
<dbReference type="EC" id="4.98.1.1" evidence="2"/>
<dbReference type="EC" id="1.11.1.-" evidence="2"/>
<dbReference type="EMBL" id="CP000036">
    <property type="protein sequence ID" value="ABB66622.1"/>
    <property type="molecule type" value="Genomic_DNA"/>
</dbReference>
<dbReference type="RefSeq" id="WP_001199474.1">
    <property type="nucleotide sequence ID" value="NC_007613.1"/>
</dbReference>
<dbReference type="SMR" id="Q31Z86"/>
<dbReference type="PeroxiBase" id="5871">
    <property type="entry name" value="SboDyPrx01"/>
</dbReference>
<dbReference type="KEGG" id="sbo:SBO_2039"/>
<dbReference type="HOGENOM" id="CLU_039488_0_0_6"/>
<dbReference type="Proteomes" id="UP000007067">
    <property type="component" value="Chromosome"/>
</dbReference>
<dbReference type="GO" id="GO:0005829">
    <property type="term" value="C:cytosol"/>
    <property type="evidence" value="ECO:0007669"/>
    <property type="project" value="TreeGrafter"/>
</dbReference>
<dbReference type="GO" id="GO:0042597">
    <property type="term" value="C:periplasmic space"/>
    <property type="evidence" value="ECO:0007669"/>
    <property type="project" value="UniProtKB-SubCell"/>
</dbReference>
<dbReference type="GO" id="GO:0004325">
    <property type="term" value="F:ferrochelatase activity"/>
    <property type="evidence" value="ECO:0007669"/>
    <property type="project" value="RHEA"/>
</dbReference>
<dbReference type="GO" id="GO:0020037">
    <property type="term" value="F:heme binding"/>
    <property type="evidence" value="ECO:0007669"/>
    <property type="project" value="InterPro"/>
</dbReference>
<dbReference type="GO" id="GO:0046872">
    <property type="term" value="F:metal ion binding"/>
    <property type="evidence" value="ECO:0007669"/>
    <property type="project" value="UniProtKB-KW"/>
</dbReference>
<dbReference type="GO" id="GO:0004601">
    <property type="term" value="F:peroxidase activity"/>
    <property type="evidence" value="ECO:0007669"/>
    <property type="project" value="UniProtKB-KW"/>
</dbReference>
<dbReference type="GO" id="GO:0033212">
    <property type="term" value="P:iron import into cell"/>
    <property type="evidence" value="ECO:0007669"/>
    <property type="project" value="InterPro"/>
</dbReference>
<dbReference type="InterPro" id="IPR011008">
    <property type="entry name" value="Dimeric_a/b-barrel"/>
</dbReference>
<dbReference type="InterPro" id="IPR048328">
    <property type="entry name" value="Dyp_perox_C"/>
</dbReference>
<dbReference type="InterPro" id="IPR048327">
    <property type="entry name" value="Dyp_perox_N"/>
</dbReference>
<dbReference type="InterPro" id="IPR006314">
    <property type="entry name" value="Dyp_peroxidase"/>
</dbReference>
<dbReference type="InterPro" id="IPR006313">
    <property type="entry name" value="EfeB/EfeN"/>
</dbReference>
<dbReference type="InterPro" id="IPR006311">
    <property type="entry name" value="TAT_signal"/>
</dbReference>
<dbReference type="NCBIfam" id="TIGR01413">
    <property type="entry name" value="Dyp_perox_fam"/>
    <property type="match status" value="1"/>
</dbReference>
<dbReference type="NCBIfam" id="TIGR01412">
    <property type="entry name" value="tat_substr_1"/>
    <property type="match status" value="1"/>
</dbReference>
<dbReference type="PANTHER" id="PTHR30521:SF4">
    <property type="entry name" value="DEFERROCHELATASE"/>
    <property type="match status" value="1"/>
</dbReference>
<dbReference type="PANTHER" id="PTHR30521">
    <property type="entry name" value="DEFERROCHELATASE/PEROXIDASE"/>
    <property type="match status" value="1"/>
</dbReference>
<dbReference type="Pfam" id="PF20628">
    <property type="entry name" value="Dyp_perox_C"/>
    <property type="match status" value="1"/>
</dbReference>
<dbReference type="Pfam" id="PF04261">
    <property type="entry name" value="Dyp_perox_N"/>
    <property type="match status" value="1"/>
</dbReference>
<dbReference type="SUPFAM" id="SSF54909">
    <property type="entry name" value="Dimeric alpha+beta barrel"/>
    <property type="match status" value="1"/>
</dbReference>
<dbReference type="PROSITE" id="PS51404">
    <property type="entry name" value="DYP_PEROXIDASE"/>
    <property type="match status" value="1"/>
</dbReference>
<dbReference type="PROSITE" id="PS51318">
    <property type="entry name" value="TAT"/>
    <property type="match status" value="1"/>
</dbReference>
<organism>
    <name type="scientific">Shigella boydii serotype 4 (strain Sb227)</name>
    <dbReference type="NCBI Taxonomy" id="300268"/>
    <lineage>
        <taxon>Bacteria</taxon>
        <taxon>Pseudomonadati</taxon>
        <taxon>Pseudomonadota</taxon>
        <taxon>Gammaproteobacteria</taxon>
        <taxon>Enterobacterales</taxon>
        <taxon>Enterobacteriaceae</taxon>
        <taxon>Shigella</taxon>
    </lineage>
</organism>
<keyword id="KW-0349">Heme</keyword>
<keyword id="KW-0408">Iron</keyword>
<keyword id="KW-0456">Lyase</keyword>
<keyword id="KW-0479">Metal-binding</keyword>
<keyword id="KW-0560">Oxidoreductase</keyword>
<keyword id="KW-0574">Periplasm</keyword>
<keyword id="KW-0575">Peroxidase</keyword>
<keyword id="KW-0732">Signal</keyword>